<sequence length="260" mass="30313">MTLEKELILRLNVGHNTVIRDVQLWREFEDGDGQIAVKNCLAEVVGMVNIDKLPFWLNRGQRYQCFTTSETSVNYFRAKLMRQRHRNRGIVCKVTGSQVLTKEQFEYFLFYKRLKTDINASFEIESMVLHLSTKHELDKKLIPLSADELQSVVPSNAGATMSIESILEKNKRQRILKSNSLNKQVLLNDQQQQFMSLLSQCILSGLRLRGVHRTQHEKLYKMTYKASEFAFRDELRETEPISFESIQDCVETLLKLFTKT</sequence>
<gene>
    <name type="primary">SLD7</name>
    <name type="ordered locus">KLLA0F16445g</name>
</gene>
<dbReference type="EMBL" id="CR382126">
    <property type="protein sequence ID" value="CAG98527.1"/>
    <property type="molecule type" value="Genomic_DNA"/>
</dbReference>
<dbReference type="RefSeq" id="XP_455819.1">
    <property type="nucleotide sequence ID" value="XM_455819.1"/>
</dbReference>
<dbReference type="SMR" id="Q6CJS0"/>
<dbReference type="FunCoup" id="Q6CJS0">
    <property type="interactions" value="16"/>
</dbReference>
<dbReference type="STRING" id="284590.Q6CJS0"/>
<dbReference type="PaxDb" id="284590-Q6CJS0"/>
<dbReference type="KEGG" id="kla:KLLA0_F16445g"/>
<dbReference type="eggNOG" id="ENOG502RZIJ">
    <property type="taxonomic scope" value="Eukaryota"/>
</dbReference>
<dbReference type="HOGENOM" id="CLU_072105_0_0_1"/>
<dbReference type="InParanoid" id="Q6CJS0"/>
<dbReference type="OMA" id="EFTHRDE"/>
<dbReference type="Proteomes" id="UP000000598">
    <property type="component" value="Chromosome F"/>
</dbReference>
<dbReference type="GO" id="GO:0005737">
    <property type="term" value="C:cytoplasm"/>
    <property type="evidence" value="ECO:0007669"/>
    <property type="project" value="UniProtKB-KW"/>
</dbReference>
<dbReference type="GO" id="GO:0005634">
    <property type="term" value="C:nucleus"/>
    <property type="evidence" value="ECO:0007669"/>
    <property type="project" value="UniProtKB-SubCell"/>
</dbReference>
<dbReference type="GO" id="GO:0000922">
    <property type="term" value="C:spindle pole"/>
    <property type="evidence" value="ECO:0007669"/>
    <property type="project" value="UniProtKB-SubCell"/>
</dbReference>
<dbReference type="GO" id="GO:0006260">
    <property type="term" value="P:DNA replication"/>
    <property type="evidence" value="ECO:0007669"/>
    <property type="project" value="UniProtKB-KW"/>
</dbReference>
<dbReference type="GO" id="GO:0030174">
    <property type="term" value="P:regulation of DNA-templated DNA replication initiation"/>
    <property type="evidence" value="ECO:0007669"/>
    <property type="project" value="InterPro"/>
</dbReference>
<dbReference type="InterPro" id="IPR016808">
    <property type="entry name" value="Sld7"/>
</dbReference>
<dbReference type="InterPro" id="IPR041260">
    <property type="entry name" value="Sld7_C"/>
</dbReference>
<dbReference type="InterPro" id="IPR041564">
    <property type="entry name" value="Sld7_N"/>
</dbReference>
<dbReference type="Pfam" id="PF18596">
    <property type="entry name" value="Sld7_C"/>
    <property type="match status" value="1"/>
</dbReference>
<dbReference type="Pfam" id="PF18636">
    <property type="entry name" value="Sld7_N"/>
    <property type="match status" value="1"/>
</dbReference>
<dbReference type="PIRSF" id="PIRSF022788">
    <property type="entry name" value="UCP022788"/>
    <property type="match status" value="1"/>
</dbReference>
<feature type="chain" id="PRO_0000411026" description="Mitochondrial morphogenesis protein SLD7">
    <location>
        <begin position="1"/>
        <end position="260"/>
    </location>
</feature>
<proteinExistence type="inferred from homology"/>
<protein>
    <recommendedName>
        <fullName>Mitochondrial morphogenesis protein SLD7</fullName>
    </recommendedName>
</protein>
<keyword id="KW-0131">Cell cycle</keyword>
<keyword id="KW-0963">Cytoplasm</keyword>
<keyword id="KW-0206">Cytoskeleton</keyword>
<keyword id="KW-0235">DNA replication</keyword>
<keyword id="KW-0539">Nucleus</keyword>
<keyword id="KW-1185">Reference proteome</keyword>
<accession>Q6CJS0</accession>
<reference key="1">
    <citation type="journal article" date="2004" name="Nature">
        <title>Genome evolution in yeasts.</title>
        <authorList>
            <person name="Dujon B."/>
            <person name="Sherman D."/>
            <person name="Fischer G."/>
            <person name="Durrens P."/>
            <person name="Casaregola S."/>
            <person name="Lafontaine I."/>
            <person name="de Montigny J."/>
            <person name="Marck C."/>
            <person name="Neuveglise C."/>
            <person name="Talla E."/>
            <person name="Goffard N."/>
            <person name="Frangeul L."/>
            <person name="Aigle M."/>
            <person name="Anthouard V."/>
            <person name="Babour A."/>
            <person name="Barbe V."/>
            <person name="Barnay S."/>
            <person name="Blanchin S."/>
            <person name="Beckerich J.-M."/>
            <person name="Beyne E."/>
            <person name="Bleykasten C."/>
            <person name="Boisrame A."/>
            <person name="Boyer J."/>
            <person name="Cattolico L."/>
            <person name="Confanioleri F."/>
            <person name="de Daruvar A."/>
            <person name="Despons L."/>
            <person name="Fabre E."/>
            <person name="Fairhead C."/>
            <person name="Ferry-Dumazet H."/>
            <person name="Groppi A."/>
            <person name="Hantraye F."/>
            <person name="Hennequin C."/>
            <person name="Jauniaux N."/>
            <person name="Joyet P."/>
            <person name="Kachouri R."/>
            <person name="Kerrest A."/>
            <person name="Koszul R."/>
            <person name="Lemaire M."/>
            <person name="Lesur I."/>
            <person name="Ma L."/>
            <person name="Muller H."/>
            <person name="Nicaud J.-M."/>
            <person name="Nikolski M."/>
            <person name="Oztas S."/>
            <person name="Ozier-Kalogeropoulos O."/>
            <person name="Pellenz S."/>
            <person name="Potier S."/>
            <person name="Richard G.-F."/>
            <person name="Straub M.-L."/>
            <person name="Suleau A."/>
            <person name="Swennen D."/>
            <person name="Tekaia F."/>
            <person name="Wesolowski-Louvel M."/>
            <person name="Westhof E."/>
            <person name="Wirth B."/>
            <person name="Zeniou-Meyer M."/>
            <person name="Zivanovic Y."/>
            <person name="Bolotin-Fukuhara M."/>
            <person name="Thierry A."/>
            <person name="Bouchier C."/>
            <person name="Caudron B."/>
            <person name="Scarpelli C."/>
            <person name="Gaillardin C."/>
            <person name="Weissenbach J."/>
            <person name="Wincker P."/>
            <person name="Souciet J.-L."/>
        </authorList>
    </citation>
    <scope>NUCLEOTIDE SEQUENCE [LARGE SCALE GENOMIC DNA]</scope>
    <source>
        <strain>ATCC 8585 / CBS 2359 / DSM 70799 / NBRC 1267 / NRRL Y-1140 / WM37</strain>
    </source>
</reference>
<evidence type="ECO:0000250" key="1"/>
<evidence type="ECO:0000305" key="2"/>
<name>SLD7_KLULA</name>
<organism>
    <name type="scientific">Kluyveromyces lactis (strain ATCC 8585 / CBS 2359 / DSM 70799 / NBRC 1267 / NRRL Y-1140 / WM37)</name>
    <name type="common">Yeast</name>
    <name type="synonym">Candida sphaerica</name>
    <dbReference type="NCBI Taxonomy" id="284590"/>
    <lineage>
        <taxon>Eukaryota</taxon>
        <taxon>Fungi</taxon>
        <taxon>Dikarya</taxon>
        <taxon>Ascomycota</taxon>
        <taxon>Saccharomycotina</taxon>
        <taxon>Saccharomycetes</taxon>
        <taxon>Saccharomycetales</taxon>
        <taxon>Saccharomycetaceae</taxon>
        <taxon>Kluyveromyces</taxon>
    </lineage>
</organism>
<comment type="function">
    <text evidence="1">Required for the proper initiation of DNA replication. Required for mitochondrial morphology (By similarity).</text>
</comment>
<comment type="subcellular location">
    <subcellularLocation>
        <location evidence="1">Nucleus</location>
    </subcellularLocation>
    <subcellularLocation>
        <location evidence="1">Cytoplasm</location>
        <location evidence="1">Cytoskeleton</location>
        <location evidence="1">Spindle pole</location>
    </subcellularLocation>
</comment>
<comment type="similarity">
    <text evidence="2">Belongs to the SLD7 family.</text>
</comment>